<evidence type="ECO:0000255" key="1">
    <source>
        <dbReference type="PROSITE-ProRule" id="PRU01020"/>
    </source>
</evidence>
<evidence type="ECO:0000269" key="2">
    <source>
    </source>
</evidence>
<evidence type="ECO:0000269" key="3">
    <source>
    </source>
</evidence>
<evidence type="ECO:0000303" key="4">
    <source>
    </source>
</evidence>
<evidence type="ECO:0000305" key="5"/>
<evidence type="ECO:0000305" key="6">
    <source>
    </source>
</evidence>
<evidence type="ECO:0007829" key="7">
    <source>
        <dbReference type="PDB" id="3I53"/>
    </source>
</evidence>
<evidence type="ECO:0007829" key="8">
    <source>
        <dbReference type="PDB" id="3I64"/>
    </source>
</evidence>
<name>NCSB1_STRCZ</name>
<keyword id="KW-0002">3D-structure</keyword>
<keyword id="KW-0045">Antibiotic biosynthesis</keyword>
<keyword id="KW-0489">Methyltransferase</keyword>
<keyword id="KW-0949">S-adenosyl-L-methionine</keyword>
<keyword id="KW-0808">Transferase</keyword>
<dbReference type="EC" id="2.1.1.303" evidence="2"/>
<dbReference type="EMBL" id="AY117439">
    <property type="protein sequence ID" value="AAM77984.1"/>
    <property type="molecule type" value="Genomic_DNA"/>
</dbReference>
<dbReference type="PDB" id="3I53">
    <property type="method" value="X-ray"/>
    <property type="resolution" value="2.08 A"/>
    <property type="chains" value="A/B=1-332"/>
</dbReference>
<dbReference type="PDB" id="3I58">
    <property type="method" value="X-ray"/>
    <property type="resolution" value="2.69 A"/>
    <property type="chains" value="A/B=1-332"/>
</dbReference>
<dbReference type="PDB" id="3I5U">
    <property type="method" value="X-ray"/>
    <property type="resolution" value="2.60 A"/>
    <property type="chains" value="A/B=1-332"/>
</dbReference>
<dbReference type="PDB" id="3I64">
    <property type="method" value="X-ray"/>
    <property type="resolution" value="3.00 A"/>
    <property type="chains" value="A/B=1-332"/>
</dbReference>
<dbReference type="PDBsum" id="3I53"/>
<dbReference type="PDBsum" id="3I58"/>
<dbReference type="PDBsum" id="3I5U"/>
<dbReference type="PDBsum" id="3I64"/>
<dbReference type="SMR" id="Q84HC8"/>
<dbReference type="KEGG" id="ag:AAM77984"/>
<dbReference type="BRENDA" id="2.1.1.303">
    <property type="organism ID" value="13527"/>
</dbReference>
<dbReference type="EvolutionaryTrace" id="Q84HC8"/>
<dbReference type="GO" id="GO:0008171">
    <property type="term" value="F:O-methyltransferase activity"/>
    <property type="evidence" value="ECO:0000314"/>
    <property type="project" value="UniProtKB"/>
</dbReference>
<dbReference type="GO" id="GO:0046983">
    <property type="term" value="F:protein dimerization activity"/>
    <property type="evidence" value="ECO:0007669"/>
    <property type="project" value="InterPro"/>
</dbReference>
<dbReference type="GO" id="GO:0017000">
    <property type="term" value="P:antibiotic biosynthetic process"/>
    <property type="evidence" value="ECO:0000314"/>
    <property type="project" value="UniProtKB"/>
</dbReference>
<dbReference type="GO" id="GO:0032259">
    <property type="term" value="P:methylation"/>
    <property type="evidence" value="ECO:0007669"/>
    <property type="project" value="UniProtKB-KW"/>
</dbReference>
<dbReference type="FunFam" id="1.10.10.10:FF:001051">
    <property type="entry name" value="Carminomycin 4-O-methyltransferase DnrK"/>
    <property type="match status" value="1"/>
</dbReference>
<dbReference type="Gene3D" id="1.10.287.1350">
    <property type="match status" value="1"/>
</dbReference>
<dbReference type="Gene3D" id="3.40.50.150">
    <property type="entry name" value="Vaccinia Virus protein VP39"/>
    <property type="match status" value="1"/>
</dbReference>
<dbReference type="Gene3D" id="1.10.10.10">
    <property type="entry name" value="Winged helix-like DNA-binding domain superfamily/Winged helix DNA-binding domain"/>
    <property type="match status" value="1"/>
</dbReference>
<dbReference type="InterPro" id="IPR016461">
    <property type="entry name" value="COMT-like"/>
</dbReference>
<dbReference type="InterPro" id="IPR001077">
    <property type="entry name" value="O_MeTrfase_dom"/>
</dbReference>
<dbReference type="InterPro" id="IPR012967">
    <property type="entry name" value="Plant_O-MeTrfase_dimerisation"/>
</dbReference>
<dbReference type="InterPro" id="IPR029063">
    <property type="entry name" value="SAM-dependent_MTases_sf"/>
</dbReference>
<dbReference type="InterPro" id="IPR036388">
    <property type="entry name" value="WH-like_DNA-bd_sf"/>
</dbReference>
<dbReference type="InterPro" id="IPR036390">
    <property type="entry name" value="WH_DNA-bd_sf"/>
</dbReference>
<dbReference type="PANTHER" id="PTHR43712:SF2">
    <property type="entry name" value="O-METHYLTRANSFERASE CICE"/>
    <property type="match status" value="1"/>
</dbReference>
<dbReference type="PANTHER" id="PTHR43712">
    <property type="entry name" value="PUTATIVE (AFU_ORTHOLOGUE AFUA_4G14580)-RELATED"/>
    <property type="match status" value="1"/>
</dbReference>
<dbReference type="Pfam" id="PF08100">
    <property type="entry name" value="Dimerisation"/>
    <property type="match status" value="1"/>
</dbReference>
<dbReference type="Pfam" id="PF00891">
    <property type="entry name" value="Methyltransf_2"/>
    <property type="match status" value="1"/>
</dbReference>
<dbReference type="PIRSF" id="PIRSF005739">
    <property type="entry name" value="O-mtase"/>
    <property type="match status" value="1"/>
</dbReference>
<dbReference type="SUPFAM" id="SSF53335">
    <property type="entry name" value="S-adenosyl-L-methionine-dependent methyltransferases"/>
    <property type="match status" value="1"/>
</dbReference>
<dbReference type="SUPFAM" id="SSF46785">
    <property type="entry name" value="Winged helix' DNA-binding domain"/>
    <property type="match status" value="1"/>
</dbReference>
<dbReference type="PROSITE" id="PS51683">
    <property type="entry name" value="SAM_OMT_II"/>
    <property type="match status" value="1"/>
</dbReference>
<comment type="function">
    <text evidence="2">S-adenosyl-L-methionine-dependent O-methyltransferase that catalyzes regiospecific methylation at the 7-hydroxy group of 2,7-dihydroxy-5-methyl-1-naphthoate in the biosynthesis of the naphthoate moiety of the neocarzinostatin chromophore. Also recognizes other dihydroxynaphthoate as substrates and catalyzes their regiospecific O-methylation. The carboxylate and its ortho-hydroxy groups of the substrate appear to be crucial for NcsB1 substrate recognition and binding, and O-methylation takes place only at the free hydroxy group of these dihydroxynaphthoic acids.</text>
</comment>
<comment type="catalytic activity">
    <reaction evidence="2">
        <text>2,7-dihydroxy-5-methyl-1-naphthoate + S-adenosyl-L-methionine = 2-hydroxy-7-methoxy-5-methyl-1-naphthoate + S-adenosyl-L-homocysteine + H(+)</text>
        <dbReference type="Rhea" id="RHEA:41536"/>
        <dbReference type="ChEBI" id="CHEBI:15378"/>
        <dbReference type="ChEBI" id="CHEBI:57856"/>
        <dbReference type="ChEBI" id="CHEBI:59789"/>
        <dbReference type="ChEBI" id="CHEBI:78281"/>
        <dbReference type="ChEBI" id="CHEBI:78282"/>
        <dbReference type="EC" id="2.1.1.303"/>
    </reaction>
</comment>
<comment type="biophysicochemical properties">
    <kinetics>
        <KM evidence="2">206 uM for 2,7-dihydroxy-5-methyl-1-naphthoate</KM>
        <KM evidence="2">352 uM for 3,5-dihydroxy-2-naphthoate</KM>
        <KM evidence="2">66 uM for 3,7-dihydroxy-2-naphthoate</KM>
        <KM evidence="2">24 uM for 1,4-dihydroxy-2-naphthoate</KM>
        <text evidence="2">kcat is 0.69 min(-1) with 2,7-dihydroxy-5-methyl-1-naphthoate as substrate. kcat is 0.27 min(-1) with 3,5-dihydroxy-2-naphthoate as substrate. kcat is 0.030 min(-1) with 3,7-dihydroxy-2-naphthoate as substrate. kcat is 0.0080 min(-1) 1,4-dihydroxy-2-naphthoate with as substrate.</text>
    </kinetics>
    <phDependence>
        <text evidence="2">Optimum pH is 6.0.</text>
    </phDependence>
</comment>
<comment type="pathway">
    <text evidence="6">Antibiotic biosynthesis.</text>
</comment>
<comment type="similarity">
    <text evidence="1">Belongs to the class I-like SAM-binding methyltransferase superfamily. Cation-independent O-methyltransferase family.</text>
</comment>
<accession>Q84HC8</accession>
<gene>
    <name evidence="4" type="primary">ncsB1</name>
</gene>
<organism>
    <name type="scientific">Streptomyces carzinostaticus</name>
    <dbReference type="NCBI Taxonomy" id="1897"/>
    <lineage>
        <taxon>Bacteria</taxon>
        <taxon>Bacillati</taxon>
        <taxon>Actinomycetota</taxon>
        <taxon>Actinomycetes</taxon>
        <taxon>Kitasatosporales</taxon>
        <taxon>Streptomycetaceae</taxon>
        <taxon>Streptomyces</taxon>
    </lineage>
</organism>
<proteinExistence type="evidence at protein level"/>
<reference key="1">
    <citation type="journal article" date="2005" name="Chem. Biol.">
        <title>The neocarzinostatin biosynthetic gene cluster from Streptomyces carzinostaticus ATCC 15944 involving two iterative type I polyketide synthases.</title>
        <authorList>
            <person name="Liu W."/>
            <person name="Nonaka K."/>
            <person name="Nie L."/>
            <person name="Zhang J."/>
            <person name="Christenson S.D."/>
            <person name="Bae J."/>
            <person name="Van Lanen S.G."/>
            <person name="Zazopoulos E."/>
            <person name="Farnet C.M."/>
            <person name="Yang C.F."/>
            <person name="Shen B."/>
        </authorList>
    </citation>
    <scope>NUCLEOTIDE SEQUENCE [GENOMIC DNA]</scope>
    <scope>PATHWAY</scope>
    <source>
        <strain>ATCC 15944 / E-793 / F-51</strain>
    </source>
</reference>
<reference key="2">
    <citation type="journal article" date="2008" name="J. Biol. Chem.">
        <title>Regiospecific O-methylation of naphthoic acids catalyzed by NcsB1, an O-methyltransferase involved in the biosynthesis of the enediyne antitumor antibiotic neocarzinostatin.</title>
        <authorList>
            <person name="Luo Y."/>
            <person name="Lin S."/>
            <person name="Zhang J."/>
            <person name="Cooke H.A."/>
            <person name="Bruner S.D."/>
            <person name="Shen B."/>
        </authorList>
    </citation>
    <scope>FUNCTION</scope>
    <scope>CATALYTIC ACTIVITY</scope>
    <scope>BIOPHYSICOCHEMICAL PROPERTIES</scope>
    <source>
        <strain>ATCC 15944 / E-793 / F-51</strain>
    </source>
</reference>
<reference key="3">
    <citation type="journal article" date="2009" name="Biochemistry">
        <title>Molecular basis of substrate promiscuity for the SAM-dependent O-methyltransferase NcsB1, involved in the biosynthesis of the enediyne antitumor antibiotic neocarzinostatin.</title>
        <authorList>
            <person name="Cooke H.A."/>
            <person name="Guenther E.L."/>
            <person name="Luo Y."/>
            <person name="Shen B."/>
            <person name="Bruner S.D."/>
        </authorList>
    </citation>
    <scope>X-RAY CRYSTALLOGRAPHY (2.08 ANGSTROMS) IN COMPLEX WITH S-ADENOSYL-L-METHIONINE AND 1,4-DIHYDROXY-2-NAPHTHOATE</scope>
    <scope>MUTAGENESIS OF ARG-11 AND TYR-293</scope>
    <source>
        <strain>ATCC 15944 / E-793 / F-51</strain>
    </source>
</reference>
<sequence length="332" mass="34592">MGKRAAHIGLRALADLATPMAVRVAATLRVADHIAAGHRTAAEIASAAGAHADSLDRLLRHLVAVGLFTRDGQGVYGLTEFGEQLRDDHAAGKRKWLDMNSAVGRGDLGFVELAHSIRTGQPAYPVRYGTSFWEDLGSDPVLSASFDTLMSHHLELDYTGIAAKYDWAALGHVVDVGGGSGGLLSALLTAHEDLSGTVLDLQGPASAAHRRFLDTGLSGRAQVVVGSFFDPLPAGAGGYVLSAVLHDWDDLSAVAILRRCAEAAGSGGVVLVIEAVAGDEHAGTGMDLRMLTYFGGKERSLAELGELAAQAGLAVRAAHPISYVSIVEMTAL</sequence>
<feature type="chain" id="PRO_0000430701" description="2,7-dihydroxy-5-methyl-1-naphthoate 7-O-methyltransferase">
    <location>
        <begin position="1"/>
        <end position="332"/>
    </location>
</feature>
<feature type="active site" description="Proton acceptor" evidence="1">
    <location>
        <position position="246"/>
    </location>
</feature>
<feature type="binding site" evidence="3">
    <location>
        <position position="11"/>
    </location>
    <ligand>
        <name>substrate</name>
    </ligand>
</feature>
<feature type="binding site" evidence="3">
    <location>
        <position position="133"/>
    </location>
    <ligand>
        <name>S-adenosyl-L-methionine</name>
        <dbReference type="ChEBI" id="CHEBI:59789"/>
    </ligand>
</feature>
<feature type="binding site" evidence="3">
    <location>
        <position position="153"/>
    </location>
    <ligand>
        <name>S-adenosyl-L-methionine</name>
        <dbReference type="ChEBI" id="CHEBI:59789"/>
    </ligand>
</feature>
<feature type="binding site" evidence="3">
    <location>
        <begin position="175"/>
        <end position="179"/>
    </location>
    <ligand>
        <name>S-adenosyl-L-methionine</name>
        <dbReference type="ChEBI" id="CHEBI:59789"/>
    </ligand>
</feature>
<feature type="binding site" evidence="3">
    <location>
        <position position="177"/>
    </location>
    <ligand>
        <name>S-adenosyl-L-methionine</name>
        <dbReference type="ChEBI" id="CHEBI:59789"/>
    </ligand>
</feature>
<feature type="binding site" evidence="1 3">
    <location>
        <position position="200"/>
    </location>
    <ligand>
        <name>S-adenosyl-L-methionine</name>
        <dbReference type="ChEBI" id="CHEBI:59789"/>
    </ligand>
</feature>
<feature type="binding site" evidence="3">
    <location>
        <begin position="227"/>
        <end position="228"/>
    </location>
    <ligand>
        <name>S-adenosyl-L-methionine</name>
        <dbReference type="ChEBI" id="CHEBI:59789"/>
    </ligand>
</feature>
<feature type="binding site" evidence="3">
    <location>
        <begin position="242"/>
        <end position="243"/>
    </location>
    <ligand>
        <name>S-adenosyl-L-methionine</name>
        <dbReference type="ChEBI" id="CHEBI:59789"/>
    </ligand>
</feature>
<feature type="binding site" evidence="3">
    <location>
        <position position="247"/>
    </location>
    <ligand>
        <name>substrate</name>
    </ligand>
</feature>
<feature type="mutagenesis site" description="Still able to methylate naphthoate. Induces a doubling of KM." evidence="3">
    <original>R</original>
    <variation>A</variation>
    <variation>W</variation>
    <location>
        <position position="11"/>
    </location>
</feature>
<feature type="mutagenesis site" description="Increased ability to methylate naphthoate. Increased rate of turnover." evidence="3">
    <original>R</original>
    <variation>K</variation>
    <location>
        <position position="11"/>
    </location>
</feature>
<feature type="mutagenesis site" description="Still able to methylate naphthoate. Induces an increase of KM." evidence="3">
    <original>Y</original>
    <variation>I</variation>
    <location>
        <position position="293"/>
    </location>
</feature>
<feature type="helix" evidence="7">
    <location>
        <begin position="10"/>
        <end position="13"/>
    </location>
</feature>
<feature type="helix" evidence="7">
    <location>
        <begin position="17"/>
        <end position="28"/>
    </location>
</feature>
<feature type="helix" evidence="7">
    <location>
        <begin position="30"/>
        <end position="35"/>
    </location>
</feature>
<feature type="helix" evidence="7">
    <location>
        <begin position="41"/>
        <end position="48"/>
    </location>
</feature>
<feature type="helix" evidence="7">
    <location>
        <begin position="52"/>
        <end position="64"/>
    </location>
</feature>
<feature type="strand" evidence="7">
    <location>
        <begin position="67"/>
        <end position="70"/>
    </location>
</feature>
<feature type="strand" evidence="7">
    <location>
        <begin position="74"/>
        <end position="78"/>
    </location>
</feature>
<feature type="helix" evidence="7">
    <location>
        <begin position="82"/>
        <end position="85"/>
    </location>
</feature>
<feature type="strand" evidence="8">
    <location>
        <begin position="89"/>
        <end position="91"/>
    </location>
</feature>
<feature type="helix" evidence="7">
    <location>
        <begin position="94"/>
        <end position="97"/>
    </location>
</feature>
<feature type="helix" evidence="7">
    <location>
        <begin position="102"/>
        <end position="106"/>
    </location>
</feature>
<feature type="helix" evidence="7">
    <location>
        <begin position="107"/>
        <end position="112"/>
    </location>
</feature>
<feature type="helix" evidence="7">
    <location>
        <begin position="113"/>
        <end position="119"/>
    </location>
</feature>
<feature type="helix" evidence="7">
    <location>
        <begin position="124"/>
        <end position="128"/>
    </location>
</feature>
<feature type="helix" evidence="7">
    <location>
        <begin position="132"/>
        <end position="138"/>
    </location>
</feature>
<feature type="helix" evidence="7">
    <location>
        <begin position="140"/>
        <end position="158"/>
    </location>
</feature>
<feature type="helix" evidence="7">
    <location>
        <begin position="161"/>
        <end position="163"/>
    </location>
</feature>
<feature type="helix" evidence="7">
    <location>
        <begin position="168"/>
        <end position="170"/>
    </location>
</feature>
<feature type="strand" evidence="7">
    <location>
        <begin position="171"/>
        <end position="176"/>
    </location>
</feature>
<feature type="helix" evidence="7">
    <location>
        <begin position="182"/>
        <end position="190"/>
    </location>
</feature>
<feature type="strand" evidence="7">
    <location>
        <begin position="195"/>
        <end position="200"/>
    </location>
</feature>
<feature type="helix" evidence="7">
    <location>
        <begin position="202"/>
        <end position="214"/>
    </location>
</feature>
<feature type="turn" evidence="7">
    <location>
        <begin position="218"/>
        <end position="220"/>
    </location>
</feature>
<feature type="strand" evidence="7">
    <location>
        <begin position="221"/>
        <end position="225"/>
    </location>
</feature>
<feature type="strand" evidence="7">
    <location>
        <begin position="237"/>
        <end position="243"/>
    </location>
</feature>
<feature type="helix" evidence="7">
    <location>
        <begin position="245"/>
        <end position="247"/>
    </location>
</feature>
<feature type="helix" evidence="7">
    <location>
        <begin position="250"/>
        <end position="264"/>
    </location>
</feature>
<feature type="turn" evidence="7">
    <location>
        <begin position="265"/>
        <end position="267"/>
    </location>
</feature>
<feature type="strand" evidence="7">
    <location>
        <begin position="269"/>
        <end position="274"/>
    </location>
</feature>
<feature type="helix" evidence="7">
    <location>
        <begin position="284"/>
        <end position="294"/>
    </location>
</feature>
<feature type="helix" evidence="7">
    <location>
        <begin position="301"/>
        <end position="310"/>
    </location>
</feature>
<feature type="strand" evidence="7">
    <location>
        <begin position="313"/>
        <end position="320"/>
    </location>
</feature>
<feature type="strand" evidence="7">
    <location>
        <begin position="322"/>
        <end position="331"/>
    </location>
</feature>
<protein>
    <recommendedName>
        <fullName evidence="5">2,7-dihydroxy-5-methyl-1-naphthoate 7-O-methyltransferase</fullName>
        <ecNumber evidence="2">2.1.1.303</ecNumber>
    </recommendedName>
    <alternativeName>
        <fullName evidence="5">Neocarzinostatin O-methyltransferase</fullName>
    </alternativeName>
    <alternativeName>
        <fullName evidence="5">Neocarzinostatin biosynthesis protein B1</fullName>
    </alternativeName>
</protein>